<name>RS1_MYCS2</name>
<evidence type="ECO:0000250" key="1">
    <source>
        <dbReference type="UniProtKB" id="P0AG67"/>
    </source>
</evidence>
<evidence type="ECO:0000255" key="2">
    <source>
        <dbReference type="PROSITE-ProRule" id="PRU00180"/>
    </source>
</evidence>
<evidence type="ECO:0000256" key="3">
    <source>
        <dbReference type="SAM" id="MobiDB-lite"/>
    </source>
</evidence>
<evidence type="ECO:0000269" key="4">
    <source>
    </source>
</evidence>
<evidence type="ECO:0000269" key="5">
    <source>
    </source>
</evidence>
<evidence type="ECO:0000269" key="6">
    <source>
    </source>
</evidence>
<evidence type="ECO:0000305" key="7"/>
<evidence type="ECO:0007829" key="8">
    <source>
        <dbReference type="PDB" id="4NNH"/>
    </source>
</evidence>
<keyword id="KW-0002">3D-structure</keyword>
<keyword id="KW-0903">Direct protein sequencing</keyword>
<keyword id="KW-0548">Nucleotidyltransferase</keyword>
<keyword id="KW-1185">Reference proteome</keyword>
<keyword id="KW-0687">Ribonucleoprotein</keyword>
<keyword id="KW-0689">Ribosomal protein</keyword>
<keyword id="KW-0694">RNA-binding</keyword>
<keyword id="KW-0808">Transferase</keyword>
<organism>
    <name type="scientific">Mycolicibacterium smegmatis (strain ATCC 700084 / mc(2)155)</name>
    <name type="common">Mycobacterium smegmatis</name>
    <dbReference type="NCBI Taxonomy" id="246196"/>
    <lineage>
        <taxon>Bacteria</taxon>
        <taxon>Bacillati</taxon>
        <taxon>Actinomycetota</taxon>
        <taxon>Actinomycetes</taxon>
        <taxon>Mycobacteriales</taxon>
        <taxon>Mycobacteriaceae</taxon>
        <taxon>Mycolicibacterium</taxon>
    </lineage>
</organism>
<reference key="1">
    <citation type="submission" date="2006-10" db="EMBL/GenBank/DDBJ databases">
        <authorList>
            <person name="Fleischmann R.D."/>
            <person name="Dodson R.J."/>
            <person name="Haft D.H."/>
            <person name="Merkel J.S."/>
            <person name="Nelson W.C."/>
            <person name="Fraser C.M."/>
        </authorList>
    </citation>
    <scope>NUCLEOTIDE SEQUENCE [LARGE SCALE GENOMIC DNA]</scope>
    <source>
        <strain>ATCC 700084 / mc(2)155</strain>
    </source>
</reference>
<reference key="2">
    <citation type="journal article" date="2007" name="Genome Biol.">
        <title>Interrupted coding sequences in Mycobacterium smegmatis: authentic mutations or sequencing errors?</title>
        <authorList>
            <person name="Deshayes C."/>
            <person name="Perrodou E."/>
            <person name="Gallien S."/>
            <person name="Euphrasie D."/>
            <person name="Schaeffer C."/>
            <person name="Van-Dorsselaer A."/>
            <person name="Poch O."/>
            <person name="Lecompte O."/>
            <person name="Reyrat J.-M."/>
        </authorList>
    </citation>
    <scope>NUCLEOTIDE SEQUENCE [LARGE SCALE GENOMIC DNA]</scope>
    <source>
        <strain>ATCC 700084 / mc(2)155</strain>
    </source>
</reference>
<reference key="3">
    <citation type="journal article" date="2009" name="Genome Res.">
        <title>Ortho-proteogenomics: multiple proteomes investigation through orthology and a new MS-based protocol.</title>
        <authorList>
            <person name="Gallien S."/>
            <person name="Perrodou E."/>
            <person name="Carapito C."/>
            <person name="Deshayes C."/>
            <person name="Reyrat J.-M."/>
            <person name="Van Dorsselaer A."/>
            <person name="Poch O."/>
            <person name="Schaeffer C."/>
            <person name="Lecompte O."/>
        </authorList>
    </citation>
    <scope>NUCLEOTIDE SEQUENCE [LARGE SCALE GENOMIC DNA]</scope>
    <source>
        <strain>ATCC 700084 / mc(2)155</strain>
    </source>
</reference>
<reference key="4">
    <citation type="journal article" date="2015" name="Genome Announc.">
        <title>Complete genome sequences of a Mycobacterium smegmatis laboratory strain (MC2 155) and isoniazid-resistant (4XR1/R2) mutant strains.</title>
        <authorList>
            <person name="Mohan A."/>
            <person name="Padiadpu J."/>
            <person name="Baloni P."/>
            <person name="Chandra N."/>
        </authorList>
    </citation>
    <scope>NUCLEOTIDE SEQUENCE [LARGE SCALE GENOMIC DNA]</scope>
    <source>
        <strain>ATCC 700084 / mc(2)155</strain>
    </source>
</reference>
<reference key="5">
    <citation type="journal article" date="2012" name="PLoS ONE">
        <title>MSMEG_2731, an uncharacterized nucleic acid binding protein from Mycobacterium smegmatis, physically interacts with RPS1.</title>
        <authorList>
            <person name="Yang M."/>
            <person name="Chen Y."/>
            <person name="Zhou Y."/>
            <person name="Wang L."/>
            <person name="Zhang H."/>
            <person name="Bi L.J."/>
            <person name="Zhang X.E."/>
        </authorList>
    </citation>
    <scope>PROTEIN SEQUENCE OF 32-58; 72-93; 112-127; 135-156; 158-167; 188-208; 290-300; 313-347; 364-377 AND 435-472</scope>
    <scope>INTERACTION WITH PROTEIN MSMEG_2731/MSMEI_2664</scope>
    <scope>SUBUNIT</scope>
</reference>
<reference key="6">
    <citation type="journal article" date="2011" name="Science">
        <title>Pyrazinamide inhibits trans-translation in Mycobacterium tuberculosis.</title>
        <authorList>
            <person name="Shi W."/>
            <person name="Zhang X."/>
            <person name="Jiang X."/>
            <person name="Yuan H."/>
            <person name="Lee J.S."/>
            <person name="Barry C.E. III"/>
            <person name="Wang H."/>
            <person name="Zhang W."/>
            <person name="Zhang Y."/>
        </authorList>
    </citation>
    <scope>FUNCTION</scope>
</reference>
<reference key="7">
    <citation type="journal article" date="2015" name="Mol. Microbiol.">
        <title>Structural basis for targeting the ribosomal protein S1 of Mycobacterium tuberculosis by pyrazinamide.</title>
        <authorList>
            <person name="Yang J."/>
            <person name="Liu Y."/>
            <person name="Bi J."/>
            <person name="Cai Q."/>
            <person name="Liao X."/>
            <person name="Li W."/>
            <person name="Guo C."/>
            <person name="Zhang Q."/>
            <person name="Lin T."/>
            <person name="Zhao Y."/>
            <person name="Wang H."/>
            <person name="Liu J."/>
            <person name="Zhang X."/>
            <person name="Lin D."/>
        </authorList>
    </citation>
    <scope>X-RAY CRYSTALLOGRAPHY (2.30 ANGSTROMS) OF 285-445</scope>
    <scope>DOMAIN</scope>
    <scope>TMRNA-BINDING</scope>
    <source>
        <strain>ATCC 700084 / mc(2)155</strain>
    </source>
</reference>
<protein>
    <recommendedName>
        <fullName evidence="7">Small ribosomal subunit protein bS1</fullName>
    </recommendedName>
    <alternativeName>
        <fullName>30S ribosomal protein S1</fullName>
    </alternativeName>
</protein>
<feature type="chain" id="PRO_0000433568" description="Small ribosomal subunit protein bS1">
    <location>
        <begin position="1"/>
        <end position="479"/>
    </location>
</feature>
<feature type="domain" description="S1 motif 1" evidence="2">
    <location>
        <begin position="36"/>
        <end position="105"/>
    </location>
</feature>
<feature type="domain" description="S1 motif 2" evidence="2">
    <location>
        <begin position="123"/>
        <end position="188"/>
    </location>
</feature>
<feature type="domain" description="S1 motif 3" evidence="2">
    <location>
        <begin position="209"/>
        <end position="277"/>
    </location>
</feature>
<feature type="domain" description="S1 motif 4" evidence="2">
    <location>
        <begin position="294"/>
        <end position="363"/>
    </location>
</feature>
<feature type="region of interest" description="Disordered" evidence="3">
    <location>
        <begin position="429"/>
        <end position="466"/>
    </location>
</feature>
<feature type="compositionally biased region" description="Low complexity" evidence="3">
    <location>
        <begin position="437"/>
        <end position="460"/>
    </location>
</feature>
<feature type="helix" evidence="8">
    <location>
        <begin position="285"/>
        <end position="288"/>
    </location>
</feature>
<feature type="strand" evidence="8">
    <location>
        <begin position="296"/>
        <end position="305"/>
    </location>
</feature>
<feature type="strand" evidence="8">
    <location>
        <begin position="308"/>
        <end position="314"/>
    </location>
</feature>
<feature type="strand" evidence="8">
    <location>
        <begin position="317"/>
        <end position="322"/>
    </location>
</feature>
<feature type="helix" evidence="8">
    <location>
        <begin position="323"/>
        <end position="325"/>
    </location>
</feature>
<feature type="helix" evidence="8">
    <location>
        <begin position="334"/>
        <end position="336"/>
    </location>
</feature>
<feature type="strand" evidence="8">
    <location>
        <begin position="343"/>
        <end position="352"/>
    </location>
</feature>
<feature type="turn" evidence="8">
    <location>
        <begin position="353"/>
        <end position="356"/>
    </location>
</feature>
<feature type="strand" evidence="8">
    <location>
        <begin position="357"/>
        <end position="361"/>
    </location>
</feature>
<feature type="helix" evidence="8">
    <location>
        <begin position="362"/>
        <end position="367"/>
    </location>
</feature>
<feature type="helix" evidence="8">
    <location>
        <begin position="375"/>
        <end position="378"/>
    </location>
</feature>
<feature type="helix" evidence="8">
    <location>
        <begin position="381"/>
        <end position="383"/>
    </location>
</feature>
<feature type="turn" evidence="8">
    <location>
        <begin position="398"/>
        <end position="401"/>
    </location>
</feature>
<feature type="helix" evidence="8">
    <location>
        <begin position="408"/>
        <end position="443"/>
    </location>
</feature>
<accession>A0QYY6</accession>
<sequence>MPSPSVTSPQVAVNDIGSAEDFLAAIDKTIKYFNDGDIVEGTIVKVDRDEVLLDIGYKTEGVIPSRELSIKHDVDPNEVVSVGDEVEALVLTKEDKEGRLILSKKRAQYERAWGTIEELKEKDEAVKGTVIEVVKGGLILDIGLRGFLPASLVEMRRVRDLQPYIGKEIEAKIIELDKNRNNVVLSRRAWLEQTQSEVRSEFLNQLQKGAIRKGVVSSIVNFGAFVDLGGVDGLVHVSELSWKHIDHPSEVVQVGDEVTVEVLDVDMDRERVSLSLKATQEDPWRHFARTHAIGQIVPGKVTKLVPFGAFVRVEEGIEGLVHISELSERHVEVPDQVVQVGDDAMVKVIDIDLERRRISLSLKQANEDYTEEFDPSKYGMADSYDEQGNYIFPEGFDPETNEWLEGFDKQREEWEARYAEAERRHKMHTAQMEKFAAAEAEAANAPVSNGSSRSEESSGGTLASDAQLAALREKLAGNA</sequence>
<comment type="function">
    <text evidence="1 4 6">Binds mRNA, facilitating recognition of most mRNAs by the 30S ribosomal subunit during translation initiation (By similarity). Plays a role in trans-translation; binds tmRNA (the product of the ssrA gene) (PubMed:25430994). Binds very poorly to pyrazinoic acid (POA), the active form of the prodrug pyrazinamide (PZA); POA does not disrupt trans-translation in this organism (PubMed:21835980). M.smegmatis is resistant to the antibiotic PZA (PubMed:25430994). In trans-translation Ala-aminoacylated transfer-messenger RNA (tmRNA, product of the ssrA gene; the 2 termini fold to resemble tRNA(Ala) while it encodes a short internal open reading frame (the tag peptide)) acts like a tRNA, entering the A-site of the ribosome and displacing the stalled mRNA (which is subsequently degraded). The ribosome then switches to translate the ORF on the tmRNA, the nascent peptide is terminated with the 'tag peptide' encoded by the tmRNA and thus targeted for degradation.</text>
</comment>
<comment type="subunit">
    <text evidence="5">Binds uncharacterized protein MSMEG_2731/MSMEI_2664.</text>
</comment>
<comment type="domain">
    <text evidence="6">Full-length S1 protein and the C-terminal domain (residues 285-479) bind tmRNA, the interaction is not disrupted by POA. Unlike M.tuberculosis (strain H37Rv) the S1 motif 4 does not bind POA, which may explain why M.smegmatis is resistant to the antibiotic PZA, the precursor to POA.</text>
</comment>
<comment type="similarity">
    <text evidence="7">Belongs to the bacterial ribosomal protein bS1 family.</text>
</comment>
<dbReference type="EMBL" id="CP000480">
    <property type="protein sequence ID" value="ABK74996.1"/>
    <property type="molecule type" value="Genomic_DNA"/>
</dbReference>
<dbReference type="EMBL" id="CP001663">
    <property type="protein sequence ID" value="AFP40201.1"/>
    <property type="molecule type" value="Genomic_DNA"/>
</dbReference>
<dbReference type="EMBL" id="CP009494">
    <property type="protein sequence ID" value="AIU08951.1"/>
    <property type="molecule type" value="Genomic_DNA"/>
</dbReference>
<dbReference type="RefSeq" id="WP_003895279.1">
    <property type="nucleotide sequence ID" value="NZ_SIJM01000005.1"/>
</dbReference>
<dbReference type="RefSeq" id="YP_888124.1">
    <property type="nucleotide sequence ID" value="NC_008596.1"/>
</dbReference>
<dbReference type="PDB" id="4NNH">
    <property type="method" value="X-ray"/>
    <property type="resolution" value="2.30 A"/>
    <property type="chains" value="A/B=285-445"/>
</dbReference>
<dbReference type="PDB" id="8WI7">
    <property type="method" value="EM"/>
    <property type="resolution" value="3.50 A"/>
    <property type="chains" value="b=1-479"/>
</dbReference>
<dbReference type="PDB" id="8WI9">
    <property type="method" value="EM"/>
    <property type="resolution" value="3.50 A"/>
    <property type="chains" value="b=1-479"/>
</dbReference>
<dbReference type="PDBsum" id="4NNH"/>
<dbReference type="PDBsum" id="8WI7"/>
<dbReference type="PDBsum" id="8WI9"/>
<dbReference type="EMDB" id="EMD-37559"/>
<dbReference type="EMDB" id="EMD-37561"/>
<dbReference type="SMR" id="A0QYY6"/>
<dbReference type="STRING" id="246196.MSMEG_3833"/>
<dbReference type="PaxDb" id="246196-MSMEI_3743"/>
<dbReference type="GeneID" id="93458573"/>
<dbReference type="KEGG" id="msb:LJ00_19040"/>
<dbReference type="KEGG" id="msg:MSMEI_3743"/>
<dbReference type="KEGG" id="msm:MSMEG_3833"/>
<dbReference type="PATRIC" id="fig|246196.19.peg.3771"/>
<dbReference type="eggNOG" id="COG0539">
    <property type="taxonomic scope" value="Bacteria"/>
</dbReference>
<dbReference type="HOGENOM" id="CLU_015805_4_1_11"/>
<dbReference type="OrthoDB" id="9804077at2"/>
<dbReference type="EvolutionaryTrace" id="A0QYY6"/>
<dbReference type="Proteomes" id="UP000000757">
    <property type="component" value="Chromosome"/>
</dbReference>
<dbReference type="Proteomes" id="UP000006158">
    <property type="component" value="Chromosome"/>
</dbReference>
<dbReference type="GO" id="GO:1990904">
    <property type="term" value="C:ribonucleoprotein complex"/>
    <property type="evidence" value="ECO:0007669"/>
    <property type="project" value="UniProtKB-KW"/>
</dbReference>
<dbReference type="GO" id="GO:0005840">
    <property type="term" value="C:ribosome"/>
    <property type="evidence" value="ECO:0007669"/>
    <property type="project" value="UniProtKB-KW"/>
</dbReference>
<dbReference type="GO" id="GO:0003729">
    <property type="term" value="F:mRNA binding"/>
    <property type="evidence" value="ECO:0007669"/>
    <property type="project" value="TreeGrafter"/>
</dbReference>
<dbReference type="GO" id="GO:0016779">
    <property type="term" value="F:nucleotidyltransferase activity"/>
    <property type="evidence" value="ECO:0007669"/>
    <property type="project" value="UniProtKB-KW"/>
</dbReference>
<dbReference type="GO" id="GO:0003735">
    <property type="term" value="F:structural constituent of ribosome"/>
    <property type="evidence" value="ECO:0007669"/>
    <property type="project" value="TreeGrafter"/>
</dbReference>
<dbReference type="GO" id="GO:0006412">
    <property type="term" value="P:translation"/>
    <property type="evidence" value="ECO:0007669"/>
    <property type="project" value="TreeGrafter"/>
</dbReference>
<dbReference type="CDD" id="cd05687">
    <property type="entry name" value="S1_RPS1_repeat_ec1_hs1"/>
    <property type="match status" value="1"/>
</dbReference>
<dbReference type="CDD" id="cd04465">
    <property type="entry name" value="S1_RPS1_repeat_ec2_hs2"/>
    <property type="match status" value="1"/>
</dbReference>
<dbReference type="CDD" id="cd05688">
    <property type="entry name" value="S1_RPS1_repeat_ec3"/>
    <property type="match status" value="1"/>
</dbReference>
<dbReference type="FunFam" id="2.40.50.140:FF:000013">
    <property type="entry name" value="30S ribosomal protein S1"/>
    <property type="match status" value="1"/>
</dbReference>
<dbReference type="FunFam" id="2.40.50.140:FF:000031">
    <property type="entry name" value="30S ribosomal protein S1"/>
    <property type="match status" value="1"/>
</dbReference>
<dbReference type="FunFam" id="2.40.50.140:FF:000035">
    <property type="entry name" value="30S ribosomal protein S1"/>
    <property type="match status" value="1"/>
</dbReference>
<dbReference type="FunFam" id="2.40.50.140:FF:000039">
    <property type="entry name" value="30S ribosomal protein S1"/>
    <property type="match status" value="1"/>
</dbReference>
<dbReference type="Gene3D" id="2.40.50.140">
    <property type="entry name" value="Nucleic acid-binding proteins"/>
    <property type="match status" value="4"/>
</dbReference>
<dbReference type="InterPro" id="IPR012340">
    <property type="entry name" value="NA-bd_OB-fold"/>
</dbReference>
<dbReference type="InterPro" id="IPR050437">
    <property type="entry name" value="Ribos_protein_bS1-like"/>
</dbReference>
<dbReference type="InterPro" id="IPR035104">
    <property type="entry name" value="Ribosomal_protein_S1-like"/>
</dbReference>
<dbReference type="InterPro" id="IPR003029">
    <property type="entry name" value="S1_domain"/>
</dbReference>
<dbReference type="NCBIfam" id="NF005208">
    <property type="entry name" value="PRK06676.1"/>
    <property type="match status" value="1"/>
</dbReference>
<dbReference type="NCBIfam" id="NF005911">
    <property type="entry name" value="PRK07899.1"/>
    <property type="match status" value="1"/>
</dbReference>
<dbReference type="PANTHER" id="PTHR10724">
    <property type="entry name" value="30S RIBOSOMAL PROTEIN S1"/>
    <property type="match status" value="1"/>
</dbReference>
<dbReference type="PANTHER" id="PTHR10724:SF7">
    <property type="entry name" value="SMALL RIBOSOMAL SUBUNIT PROTEIN BS1C"/>
    <property type="match status" value="1"/>
</dbReference>
<dbReference type="Pfam" id="PF00575">
    <property type="entry name" value="S1"/>
    <property type="match status" value="4"/>
</dbReference>
<dbReference type="PRINTS" id="PR00681">
    <property type="entry name" value="RIBOSOMALS1"/>
</dbReference>
<dbReference type="SMART" id="SM00316">
    <property type="entry name" value="S1"/>
    <property type="match status" value="4"/>
</dbReference>
<dbReference type="SUPFAM" id="SSF50249">
    <property type="entry name" value="Nucleic acid-binding proteins"/>
    <property type="match status" value="4"/>
</dbReference>
<dbReference type="PROSITE" id="PS50126">
    <property type="entry name" value="S1"/>
    <property type="match status" value="4"/>
</dbReference>
<proteinExistence type="evidence at protein level"/>
<gene>
    <name type="primary">rpsA</name>
    <name type="ordered locus">MSMEG_3833</name>
    <name type="ordered locus">MSMEI_3743</name>
    <name type="ORF">LJ00_19040</name>
</gene>